<organism>
    <name type="scientific">Shewanella amazonensis (strain ATCC BAA-1098 / SB2B)</name>
    <dbReference type="NCBI Taxonomy" id="326297"/>
    <lineage>
        <taxon>Bacteria</taxon>
        <taxon>Pseudomonadati</taxon>
        <taxon>Pseudomonadota</taxon>
        <taxon>Gammaproteobacteria</taxon>
        <taxon>Alteromonadales</taxon>
        <taxon>Shewanellaceae</taxon>
        <taxon>Shewanella</taxon>
    </lineage>
</organism>
<reference key="1">
    <citation type="submission" date="2006-12" db="EMBL/GenBank/DDBJ databases">
        <title>Complete sequence of Shewanella amazonensis SB2B.</title>
        <authorList>
            <consortium name="US DOE Joint Genome Institute"/>
            <person name="Copeland A."/>
            <person name="Lucas S."/>
            <person name="Lapidus A."/>
            <person name="Barry K."/>
            <person name="Detter J.C."/>
            <person name="Glavina del Rio T."/>
            <person name="Hammon N."/>
            <person name="Israni S."/>
            <person name="Dalin E."/>
            <person name="Tice H."/>
            <person name="Pitluck S."/>
            <person name="Munk A.C."/>
            <person name="Brettin T."/>
            <person name="Bruce D."/>
            <person name="Han C."/>
            <person name="Tapia R."/>
            <person name="Gilna P."/>
            <person name="Schmutz J."/>
            <person name="Larimer F."/>
            <person name="Land M."/>
            <person name="Hauser L."/>
            <person name="Kyrpides N."/>
            <person name="Mikhailova N."/>
            <person name="Fredrickson J."/>
            <person name="Richardson P."/>
        </authorList>
    </citation>
    <scope>NUCLEOTIDE SEQUENCE [LARGE SCALE GENOMIC DNA]</scope>
    <source>
        <strain>ATCC BAA-1098 / SB2B</strain>
    </source>
</reference>
<gene>
    <name evidence="1" type="primary">zipA</name>
    <name type="ordered locus">Sama_1515</name>
</gene>
<feature type="chain" id="PRO_1000015152" description="Cell division protein ZipA">
    <location>
        <begin position="1"/>
        <end position="350"/>
    </location>
</feature>
<feature type="topological domain" description="Periplasmic" evidence="1">
    <location>
        <begin position="1"/>
        <end position="6"/>
    </location>
</feature>
<feature type="transmembrane region" description="Helical" evidence="1">
    <location>
        <begin position="7"/>
        <end position="27"/>
    </location>
</feature>
<feature type="topological domain" description="Cytoplasmic" evidence="1">
    <location>
        <begin position="28"/>
        <end position="350"/>
    </location>
</feature>
<feature type="region of interest" description="Disordered" evidence="2">
    <location>
        <begin position="36"/>
        <end position="55"/>
    </location>
</feature>
<feature type="region of interest" description="Disordered" evidence="2">
    <location>
        <begin position="65"/>
        <end position="136"/>
    </location>
</feature>
<feature type="region of interest" description="Disordered" evidence="2">
    <location>
        <begin position="187"/>
        <end position="213"/>
    </location>
</feature>
<feature type="compositionally biased region" description="Basic and acidic residues" evidence="2">
    <location>
        <begin position="65"/>
        <end position="109"/>
    </location>
</feature>
<feature type="compositionally biased region" description="Basic and acidic residues" evidence="2">
    <location>
        <begin position="116"/>
        <end position="131"/>
    </location>
</feature>
<accession>A1S5R6</accession>
<proteinExistence type="inferred from homology"/>
<dbReference type="EMBL" id="CP000507">
    <property type="protein sequence ID" value="ABL99722.1"/>
    <property type="molecule type" value="Genomic_DNA"/>
</dbReference>
<dbReference type="RefSeq" id="WP_011759630.1">
    <property type="nucleotide sequence ID" value="NC_008700.1"/>
</dbReference>
<dbReference type="SMR" id="A1S5R6"/>
<dbReference type="STRING" id="326297.Sama_1515"/>
<dbReference type="KEGG" id="saz:Sama_1515"/>
<dbReference type="eggNOG" id="COG3115">
    <property type="taxonomic scope" value="Bacteria"/>
</dbReference>
<dbReference type="HOGENOM" id="CLU_030174_1_0_6"/>
<dbReference type="OrthoDB" id="7054914at2"/>
<dbReference type="Proteomes" id="UP000009175">
    <property type="component" value="Chromosome"/>
</dbReference>
<dbReference type="GO" id="GO:0032153">
    <property type="term" value="C:cell division site"/>
    <property type="evidence" value="ECO:0007669"/>
    <property type="project" value="UniProtKB-UniRule"/>
</dbReference>
<dbReference type="GO" id="GO:0005886">
    <property type="term" value="C:plasma membrane"/>
    <property type="evidence" value="ECO:0007669"/>
    <property type="project" value="UniProtKB-SubCell"/>
</dbReference>
<dbReference type="GO" id="GO:0000917">
    <property type="term" value="P:division septum assembly"/>
    <property type="evidence" value="ECO:0007669"/>
    <property type="project" value="TreeGrafter"/>
</dbReference>
<dbReference type="GO" id="GO:0043093">
    <property type="term" value="P:FtsZ-dependent cytokinesis"/>
    <property type="evidence" value="ECO:0007669"/>
    <property type="project" value="UniProtKB-UniRule"/>
</dbReference>
<dbReference type="Gene3D" id="3.30.1400.10">
    <property type="entry name" value="ZipA, C-terminal FtsZ-binding domain"/>
    <property type="match status" value="1"/>
</dbReference>
<dbReference type="HAMAP" id="MF_00509">
    <property type="entry name" value="ZipA"/>
    <property type="match status" value="1"/>
</dbReference>
<dbReference type="InterPro" id="IPR011919">
    <property type="entry name" value="Cell_div_ZipA"/>
</dbReference>
<dbReference type="InterPro" id="IPR007449">
    <property type="entry name" value="ZipA_FtsZ-bd_C"/>
</dbReference>
<dbReference type="InterPro" id="IPR036765">
    <property type="entry name" value="ZipA_FtsZ-bd_C_sf"/>
</dbReference>
<dbReference type="NCBIfam" id="TIGR02205">
    <property type="entry name" value="septum_zipA"/>
    <property type="match status" value="1"/>
</dbReference>
<dbReference type="PANTHER" id="PTHR38685">
    <property type="entry name" value="CELL DIVISION PROTEIN ZIPA"/>
    <property type="match status" value="1"/>
</dbReference>
<dbReference type="PANTHER" id="PTHR38685:SF1">
    <property type="entry name" value="CELL DIVISION PROTEIN ZIPA"/>
    <property type="match status" value="1"/>
</dbReference>
<dbReference type="Pfam" id="PF04354">
    <property type="entry name" value="ZipA_C"/>
    <property type="match status" value="1"/>
</dbReference>
<dbReference type="SMART" id="SM00771">
    <property type="entry name" value="ZipA_C"/>
    <property type="match status" value="1"/>
</dbReference>
<dbReference type="SUPFAM" id="SSF64383">
    <property type="entry name" value="Cell-division protein ZipA, C-terminal domain"/>
    <property type="match status" value="1"/>
</dbReference>
<evidence type="ECO:0000255" key="1">
    <source>
        <dbReference type="HAMAP-Rule" id="MF_00509"/>
    </source>
</evidence>
<evidence type="ECO:0000256" key="2">
    <source>
        <dbReference type="SAM" id="MobiDB-lite"/>
    </source>
</evidence>
<keyword id="KW-0131">Cell cycle</keyword>
<keyword id="KW-0132">Cell division</keyword>
<keyword id="KW-0997">Cell inner membrane</keyword>
<keyword id="KW-1003">Cell membrane</keyword>
<keyword id="KW-0472">Membrane</keyword>
<keyword id="KW-1185">Reference proteome</keyword>
<keyword id="KW-0812">Transmembrane</keyword>
<keyword id="KW-1133">Transmembrane helix</keyword>
<protein>
    <recommendedName>
        <fullName evidence="1">Cell division protein ZipA</fullName>
    </recommendedName>
</protein>
<name>ZIPA_SHEAM</name>
<comment type="function">
    <text evidence="1">Essential cell division protein that stabilizes the FtsZ protofilaments by cross-linking them and that serves as a cytoplasmic membrane anchor for the Z ring. Also required for the recruitment to the septal ring of downstream cell division proteins.</text>
</comment>
<comment type="subunit">
    <text evidence="1">Interacts with FtsZ via their C-terminal domains.</text>
</comment>
<comment type="subcellular location">
    <subcellularLocation>
        <location evidence="1">Cell inner membrane</location>
        <topology evidence="1">Single-pass type I membrane protein</topology>
    </subcellularLocation>
    <text evidence="1">Localizes to the Z ring in an FtsZ-dependent manner.</text>
</comment>
<comment type="similarity">
    <text evidence="1">Belongs to the ZipA family.</text>
</comment>
<sequence length="350" mass="38840">MEDLQLVLFVLGAIAIVAVLVHGFWSIRKQQPRTIKEQPRTPYAMSPGRRDAEGFDADGIGEVRVRKLAPDDKKSEPVKASHDDTFSLSDEPKVRRVKERQEPVLESRADAAPNHAAHERRGHDFRHHEEPSPSARQVQLGLLDDLDQEPSQGELYEEINASVADYDDDYDAYENQPASVDRAEAARVPADQGQAAHSAATQAEPQAKAEEPLPDPRDVLVLHVVAREGQVLAGAELLPCLLELNFKYGDMEIFHRHEDNAGNGKVLFSLANMLKPGTFDPDTMEQFNTHGIVLFMTLPCHGEAVMNFSLMLNSACQLADDLDALVLDGQRQLWSDATKAQYLARIRANA</sequence>